<name>PLAS_FRIAG</name>
<comment type="function">
    <text evidence="2">Participates in electron transfer between P700 and the cytochrome b6-f complex in photosystem I.</text>
</comment>
<comment type="cofactor">
    <cofactor evidence="2">
        <name>Cu(2+)</name>
        <dbReference type="ChEBI" id="CHEBI:29036"/>
    </cofactor>
</comment>
<comment type="subcellular location">
    <subcellularLocation>
        <location evidence="2">Plastid</location>
        <location evidence="2">Chloroplast thylakoid membrane</location>
        <topology evidence="2">Peripheral membrane protein</topology>
        <orientation evidence="2">Lumenal side</orientation>
    </subcellularLocation>
    <text>Loosely bound to the inner thylakoid membrane surface in chloroplasts (By similarity).</text>
</comment>
<comment type="similarity">
    <text evidence="3">Belongs to the plastocyanin family.</text>
</comment>
<feature type="transit peptide" description="Chloroplast" evidence="1">
    <location>
        <begin position="1"/>
        <end position="67"/>
    </location>
</feature>
<feature type="chain" id="PRO_0000002887" description="Plastocyanin, chloroplastic">
    <location>
        <begin position="68"/>
        <end position="166"/>
    </location>
</feature>
<feature type="domain" description="Plastocyanin-like">
    <location>
        <begin position="68"/>
        <end position="166"/>
    </location>
</feature>
<feature type="binding site" evidence="2">
    <location>
        <position position="104"/>
    </location>
    <ligand>
        <name>Cu cation</name>
        <dbReference type="ChEBI" id="CHEBI:23378"/>
    </ligand>
</feature>
<feature type="binding site" evidence="2">
    <location>
        <position position="151"/>
    </location>
    <ligand>
        <name>Cu cation</name>
        <dbReference type="ChEBI" id="CHEBI:23378"/>
    </ligand>
</feature>
<feature type="binding site" evidence="2">
    <location>
        <position position="154"/>
    </location>
    <ligand>
        <name>Cu cation</name>
        <dbReference type="ChEBI" id="CHEBI:23378"/>
    </ligand>
</feature>
<feature type="binding site" evidence="2">
    <location>
        <position position="159"/>
    </location>
    <ligand>
        <name>Cu cation</name>
        <dbReference type="ChEBI" id="CHEBI:23378"/>
    </ligand>
</feature>
<dbReference type="EMBL" id="AF031545">
    <property type="protein sequence ID" value="AAB86855.1"/>
    <property type="molecule type" value="mRNA"/>
</dbReference>
<dbReference type="SMR" id="O22646"/>
<dbReference type="GO" id="GO:0009543">
    <property type="term" value="C:chloroplast thylakoid lumen"/>
    <property type="evidence" value="ECO:0007669"/>
    <property type="project" value="TreeGrafter"/>
</dbReference>
<dbReference type="GO" id="GO:0009535">
    <property type="term" value="C:chloroplast thylakoid membrane"/>
    <property type="evidence" value="ECO:0007669"/>
    <property type="project" value="UniProtKB-SubCell"/>
</dbReference>
<dbReference type="GO" id="GO:0005507">
    <property type="term" value="F:copper ion binding"/>
    <property type="evidence" value="ECO:0007669"/>
    <property type="project" value="InterPro"/>
</dbReference>
<dbReference type="GO" id="GO:0046028">
    <property type="term" value="F:electron transporter, transferring electrons from cytochrome b6/f complex of photosystem II activity"/>
    <property type="evidence" value="ECO:0007669"/>
    <property type="project" value="TreeGrafter"/>
</dbReference>
<dbReference type="CDD" id="cd04219">
    <property type="entry name" value="Plastocyanin"/>
    <property type="match status" value="1"/>
</dbReference>
<dbReference type="Gene3D" id="2.60.40.420">
    <property type="entry name" value="Cupredoxins - blue copper proteins"/>
    <property type="match status" value="1"/>
</dbReference>
<dbReference type="InterPro" id="IPR000923">
    <property type="entry name" value="BlueCu_1"/>
</dbReference>
<dbReference type="InterPro" id="IPR001235">
    <property type="entry name" value="Copper_blue_Plastocyanin"/>
</dbReference>
<dbReference type="InterPro" id="IPR008972">
    <property type="entry name" value="Cupredoxin"/>
</dbReference>
<dbReference type="InterPro" id="IPR002387">
    <property type="entry name" value="Plastocyanin"/>
</dbReference>
<dbReference type="NCBIfam" id="TIGR02656">
    <property type="entry name" value="cyanin_plasto"/>
    <property type="match status" value="1"/>
</dbReference>
<dbReference type="PANTHER" id="PTHR34192">
    <property type="entry name" value="PLASTOCYANIN MAJOR ISOFORM, CHLOROPLASTIC-RELATED"/>
    <property type="match status" value="1"/>
</dbReference>
<dbReference type="PANTHER" id="PTHR34192:SF10">
    <property type="entry name" value="PLASTOCYANIN MAJOR ISOFORM, CHLOROPLASTIC-RELATED"/>
    <property type="match status" value="1"/>
</dbReference>
<dbReference type="Pfam" id="PF00127">
    <property type="entry name" value="Copper-bind"/>
    <property type="match status" value="1"/>
</dbReference>
<dbReference type="PRINTS" id="PR00156">
    <property type="entry name" value="COPPERBLUE"/>
</dbReference>
<dbReference type="PRINTS" id="PR00157">
    <property type="entry name" value="PLASTOCYANIN"/>
</dbReference>
<dbReference type="SUPFAM" id="SSF49503">
    <property type="entry name" value="Cupredoxins"/>
    <property type="match status" value="1"/>
</dbReference>
<sequence length="166" mass="16788">MASLTSAAVTIPSFTGLKAGRAPTTPSTSIKPPTPMSFSVKASFKEAIGTALVATAAGAVLASNALAVEVLLGGSDGSLAFVPSNIEVAAGETVVFKNNAGFPHNVLFDEDEVPKGVDAGAISMKEEDLLNAPGETFSVTLKEKGTYSIYCSPHQGAGMAGKITVN</sequence>
<accession>O22646</accession>
<gene>
    <name type="primary">PETE</name>
    <name type="synonym">PLOC</name>
</gene>
<proteinExistence type="evidence at transcript level"/>
<reference key="1">
    <citation type="submission" date="1997-10" db="EMBL/GenBank/DDBJ databases">
        <authorList>
            <person name="Panico E."/>
            <person name="Baysdorfer C."/>
        </authorList>
    </citation>
    <scope>NUCLEOTIDE SEQUENCE [MRNA]</scope>
</reference>
<organism>
    <name type="scientific">Fritillaria agrestis</name>
    <name type="common">Stinkbells</name>
    <dbReference type="NCBI Taxonomy" id="64177"/>
    <lineage>
        <taxon>Eukaryota</taxon>
        <taxon>Viridiplantae</taxon>
        <taxon>Streptophyta</taxon>
        <taxon>Embryophyta</taxon>
        <taxon>Tracheophyta</taxon>
        <taxon>Spermatophyta</taxon>
        <taxon>Magnoliopsida</taxon>
        <taxon>Liliopsida</taxon>
        <taxon>Liliales</taxon>
        <taxon>Liliaceae</taxon>
        <taxon>Fritillaria</taxon>
    </lineage>
</organism>
<protein>
    <recommendedName>
        <fullName>Plastocyanin, chloroplastic</fullName>
    </recommendedName>
</protein>
<keyword id="KW-0150">Chloroplast</keyword>
<keyword id="KW-0186">Copper</keyword>
<keyword id="KW-0249">Electron transport</keyword>
<keyword id="KW-0472">Membrane</keyword>
<keyword id="KW-0479">Metal-binding</keyword>
<keyword id="KW-0934">Plastid</keyword>
<keyword id="KW-0793">Thylakoid</keyword>
<keyword id="KW-0809">Transit peptide</keyword>
<keyword id="KW-0813">Transport</keyword>
<evidence type="ECO:0000250" key="1"/>
<evidence type="ECO:0000250" key="2">
    <source>
        <dbReference type="UniProtKB" id="P18068"/>
    </source>
</evidence>
<evidence type="ECO:0000305" key="3"/>